<sequence>MEGNQAGSSLDSLIASFNKRIGELQELVIARNMYPASTIPDLSAIDTALSSMELQVQSIKDRLREETEAIPKAKKLIEASLKQQGKLQKMSIYAPSHFPDKATMLNSDLNRCLLQENAKQYEQHSTLSSLKFDEEAAVLPKEKKGRGSPPLWYITVEELNSLSSYMRGRLTLEKVNAAINDMASYAEANAHLIAASKQKLAENLWEKALKLRDIVTEQAVKGKHFFLETDMKGPSLKLDNTGKAILTVLRHLGRISETRIGQNRVIILMKPH</sequence>
<organism>
    <name type="scientific">Arabidopsis thaliana</name>
    <name type="common">Mouse-ear cress</name>
    <dbReference type="NCBI Taxonomy" id="3702"/>
    <lineage>
        <taxon>Eukaryota</taxon>
        <taxon>Viridiplantae</taxon>
        <taxon>Streptophyta</taxon>
        <taxon>Embryophyta</taxon>
        <taxon>Tracheophyta</taxon>
        <taxon>Spermatophyta</taxon>
        <taxon>Magnoliopsida</taxon>
        <taxon>eudicotyledons</taxon>
        <taxon>Gunneridae</taxon>
        <taxon>Pentapetalae</taxon>
        <taxon>rosids</taxon>
        <taxon>malvids</taxon>
        <taxon>Brassicales</taxon>
        <taxon>Brassicaceae</taxon>
        <taxon>Camelineae</taxon>
        <taxon>Arabidopsis</taxon>
    </lineage>
</organism>
<protein>
    <recommendedName>
        <fullName evidence="2">SKA complex subunit 1 homolog</fullName>
    </recommendedName>
    <alternativeName>
        <fullName evidence="2">Spindle and kinetochore-associated protein 1 homolog</fullName>
    </alternativeName>
</protein>
<dbReference type="EMBL" id="AL162295">
    <property type="protein sequence ID" value="CAB82670.1"/>
    <property type="molecule type" value="Genomic_DNA"/>
</dbReference>
<dbReference type="EMBL" id="CP002686">
    <property type="protein sequence ID" value="AEE80094.1"/>
    <property type="molecule type" value="Genomic_DNA"/>
</dbReference>
<dbReference type="EMBL" id="AK117601">
    <property type="protein sequence ID" value="BAC42258.1"/>
    <property type="molecule type" value="mRNA"/>
</dbReference>
<dbReference type="EMBL" id="BT005101">
    <property type="protein sequence ID" value="AAO50634.1"/>
    <property type="molecule type" value="mRNA"/>
</dbReference>
<dbReference type="PIR" id="T47877">
    <property type="entry name" value="T47877"/>
</dbReference>
<dbReference type="RefSeq" id="NP_191625.1">
    <property type="nucleotide sequence ID" value="NM_115930.3"/>
</dbReference>
<dbReference type="SMR" id="Q9LZZ7"/>
<dbReference type="BioGRID" id="10551">
    <property type="interactions" value="1"/>
</dbReference>
<dbReference type="FunCoup" id="Q9LZZ7">
    <property type="interactions" value="839"/>
</dbReference>
<dbReference type="IntAct" id="Q9LZZ7">
    <property type="interactions" value="1"/>
</dbReference>
<dbReference type="STRING" id="3702.Q9LZZ7"/>
<dbReference type="PaxDb" id="3702-AT3G60660.1"/>
<dbReference type="ProteomicsDB" id="234469"/>
<dbReference type="DNASU" id="825237"/>
<dbReference type="EnsemblPlants" id="AT3G60660.1">
    <property type="protein sequence ID" value="AT3G60660.1"/>
    <property type="gene ID" value="AT3G60660"/>
</dbReference>
<dbReference type="GeneID" id="825237"/>
<dbReference type="Gramene" id="AT3G60660.1">
    <property type="protein sequence ID" value="AT3G60660.1"/>
    <property type="gene ID" value="AT3G60660"/>
</dbReference>
<dbReference type="KEGG" id="ath:AT3G60660"/>
<dbReference type="Araport" id="AT3G60660"/>
<dbReference type="TAIR" id="AT3G60660"/>
<dbReference type="eggNOG" id="KOG4832">
    <property type="taxonomic scope" value="Eukaryota"/>
</dbReference>
<dbReference type="HOGENOM" id="CLU_087423_0_0_1"/>
<dbReference type="InParanoid" id="Q9LZZ7"/>
<dbReference type="OMA" id="PTGMRED"/>
<dbReference type="OrthoDB" id="5962at2759"/>
<dbReference type="PhylomeDB" id="Q9LZZ7"/>
<dbReference type="PRO" id="PR:Q9LZZ7"/>
<dbReference type="Proteomes" id="UP000006548">
    <property type="component" value="Chromosome 3"/>
</dbReference>
<dbReference type="ExpressionAtlas" id="Q9LZZ7">
    <property type="expression patterns" value="baseline and differential"/>
</dbReference>
<dbReference type="GO" id="GO:0008017">
    <property type="term" value="F:microtubule binding"/>
    <property type="evidence" value="ECO:0000250"/>
    <property type="project" value="UniProtKB"/>
</dbReference>
<dbReference type="GO" id="GO:0051315">
    <property type="term" value="P:attachment of mitotic spindle microtubules to kinetochore"/>
    <property type="evidence" value="ECO:0000250"/>
    <property type="project" value="UniProtKB"/>
</dbReference>
<dbReference type="GO" id="GO:0051301">
    <property type="term" value="P:cell division"/>
    <property type="evidence" value="ECO:0007669"/>
    <property type="project" value="InterPro"/>
</dbReference>
<dbReference type="FunFam" id="1.10.10.1890:FF:000002">
    <property type="entry name" value="Spindle and kinetochore-associated protein 1"/>
    <property type="match status" value="1"/>
</dbReference>
<dbReference type="Gene3D" id="1.10.10.1890">
    <property type="entry name" value="Ska1 microtubule binding domain-like"/>
    <property type="match status" value="1"/>
</dbReference>
<dbReference type="InterPro" id="IPR009829">
    <property type="entry name" value="SKA1"/>
</dbReference>
<dbReference type="InterPro" id="IPR042031">
    <property type="entry name" value="SKA1_MBD_sf"/>
</dbReference>
<dbReference type="PANTHER" id="PTHR28573">
    <property type="entry name" value="SPINDLE AND KINETOCHORE-ASSOCIATED PROTEIN 1"/>
    <property type="match status" value="1"/>
</dbReference>
<dbReference type="PANTHER" id="PTHR28573:SF1">
    <property type="entry name" value="SPINDLE AND KINETOCHORE-ASSOCIATED PROTEIN 1"/>
    <property type="match status" value="1"/>
</dbReference>
<dbReference type="Pfam" id="PF07160">
    <property type="entry name" value="SKA1"/>
    <property type="match status" value="1"/>
</dbReference>
<comment type="similarity">
    <text evidence="2">Belongs to the SKA1 family.</text>
</comment>
<reference key="1">
    <citation type="journal article" date="2000" name="Nature">
        <title>Sequence and analysis of chromosome 3 of the plant Arabidopsis thaliana.</title>
        <authorList>
            <person name="Salanoubat M."/>
            <person name="Lemcke K."/>
            <person name="Rieger M."/>
            <person name="Ansorge W."/>
            <person name="Unseld M."/>
            <person name="Fartmann B."/>
            <person name="Valle G."/>
            <person name="Bloecker H."/>
            <person name="Perez-Alonso M."/>
            <person name="Obermaier B."/>
            <person name="Delseny M."/>
            <person name="Boutry M."/>
            <person name="Grivell L.A."/>
            <person name="Mache R."/>
            <person name="Puigdomenech P."/>
            <person name="De Simone V."/>
            <person name="Choisne N."/>
            <person name="Artiguenave F."/>
            <person name="Robert C."/>
            <person name="Brottier P."/>
            <person name="Wincker P."/>
            <person name="Cattolico L."/>
            <person name="Weissenbach J."/>
            <person name="Saurin W."/>
            <person name="Quetier F."/>
            <person name="Schaefer M."/>
            <person name="Mueller-Auer S."/>
            <person name="Gabel C."/>
            <person name="Fuchs M."/>
            <person name="Benes V."/>
            <person name="Wurmbach E."/>
            <person name="Drzonek H."/>
            <person name="Erfle H."/>
            <person name="Jordan N."/>
            <person name="Bangert S."/>
            <person name="Wiedelmann R."/>
            <person name="Kranz H."/>
            <person name="Voss H."/>
            <person name="Holland R."/>
            <person name="Brandt P."/>
            <person name="Nyakatura G."/>
            <person name="Vezzi A."/>
            <person name="D'Angelo M."/>
            <person name="Pallavicini A."/>
            <person name="Toppo S."/>
            <person name="Simionati B."/>
            <person name="Conrad A."/>
            <person name="Hornischer K."/>
            <person name="Kauer G."/>
            <person name="Loehnert T.-H."/>
            <person name="Nordsiek G."/>
            <person name="Reichelt J."/>
            <person name="Scharfe M."/>
            <person name="Schoen O."/>
            <person name="Bargues M."/>
            <person name="Terol J."/>
            <person name="Climent J."/>
            <person name="Navarro P."/>
            <person name="Collado C."/>
            <person name="Perez-Perez A."/>
            <person name="Ottenwaelder B."/>
            <person name="Duchemin D."/>
            <person name="Cooke R."/>
            <person name="Laudie M."/>
            <person name="Berger-Llauro C."/>
            <person name="Purnelle B."/>
            <person name="Masuy D."/>
            <person name="de Haan M."/>
            <person name="Maarse A.C."/>
            <person name="Alcaraz J.-P."/>
            <person name="Cottet A."/>
            <person name="Casacuberta E."/>
            <person name="Monfort A."/>
            <person name="Argiriou A."/>
            <person name="Flores M."/>
            <person name="Liguori R."/>
            <person name="Vitale D."/>
            <person name="Mannhaupt G."/>
            <person name="Haase D."/>
            <person name="Schoof H."/>
            <person name="Rudd S."/>
            <person name="Zaccaria P."/>
            <person name="Mewes H.-W."/>
            <person name="Mayer K.F.X."/>
            <person name="Kaul S."/>
            <person name="Town C.D."/>
            <person name="Koo H.L."/>
            <person name="Tallon L.J."/>
            <person name="Jenkins J."/>
            <person name="Rooney T."/>
            <person name="Rizzo M."/>
            <person name="Walts A."/>
            <person name="Utterback T."/>
            <person name="Fujii C.Y."/>
            <person name="Shea T.P."/>
            <person name="Creasy T.H."/>
            <person name="Haas B."/>
            <person name="Maiti R."/>
            <person name="Wu D."/>
            <person name="Peterson J."/>
            <person name="Van Aken S."/>
            <person name="Pai G."/>
            <person name="Militscher J."/>
            <person name="Sellers P."/>
            <person name="Gill J.E."/>
            <person name="Feldblyum T.V."/>
            <person name="Preuss D."/>
            <person name="Lin X."/>
            <person name="Nierman W.C."/>
            <person name="Salzberg S.L."/>
            <person name="White O."/>
            <person name="Venter J.C."/>
            <person name="Fraser C.M."/>
            <person name="Kaneko T."/>
            <person name="Nakamura Y."/>
            <person name="Sato S."/>
            <person name="Kato T."/>
            <person name="Asamizu E."/>
            <person name="Sasamoto S."/>
            <person name="Kimura T."/>
            <person name="Idesawa K."/>
            <person name="Kawashima K."/>
            <person name="Kishida Y."/>
            <person name="Kiyokawa C."/>
            <person name="Kohara M."/>
            <person name="Matsumoto M."/>
            <person name="Matsuno A."/>
            <person name="Muraki A."/>
            <person name="Nakayama S."/>
            <person name="Nakazaki N."/>
            <person name="Shinpo S."/>
            <person name="Takeuchi C."/>
            <person name="Wada T."/>
            <person name="Watanabe A."/>
            <person name="Yamada M."/>
            <person name="Yasuda M."/>
            <person name="Tabata S."/>
        </authorList>
    </citation>
    <scope>NUCLEOTIDE SEQUENCE [LARGE SCALE GENOMIC DNA]</scope>
    <source>
        <strain>cv. Columbia</strain>
    </source>
</reference>
<reference key="2">
    <citation type="journal article" date="2017" name="Plant J.">
        <title>Araport11: a complete reannotation of the Arabidopsis thaliana reference genome.</title>
        <authorList>
            <person name="Cheng C.Y."/>
            <person name="Krishnakumar V."/>
            <person name="Chan A.P."/>
            <person name="Thibaud-Nissen F."/>
            <person name="Schobel S."/>
            <person name="Town C.D."/>
        </authorList>
    </citation>
    <scope>GENOME REANNOTATION</scope>
    <source>
        <strain>cv. Columbia</strain>
    </source>
</reference>
<reference key="3">
    <citation type="journal article" date="2002" name="Science">
        <title>Functional annotation of a full-length Arabidopsis cDNA collection.</title>
        <authorList>
            <person name="Seki M."/>
            <person name="Narusaka M."/>
            <person name="Kamiya A."/>
            <person name="Ishida J."/>
            <person name="Satou M."/>
            <person name="Sakurai T."/>
            <person name="Nakajima M."/>
            <person name="Enju A."/>
            <person name="Akiyama K."/>
            <person name="Oono Y."/>
            <person name="Muramatsu M."/>
            <person name="Hayashizaki Y."/>
            <person name="Kawai J."/>
            <person name="Carninci P."/>
            <person name="Itoh M."/>
            <person name="Ishii Y."/>
            <person name="Arakawa T."/>
            <person name="Shibata K."/>
            <person name="Shinagawa A."/>
            <person name="Shinozaki K."/>
        </authorList>
    </citation>
    <scope>NUCLEOTIDE SEQUENCE [LARGE SCALE MRNA]</scope>
    <source>
        <strain>cv. Columbia</strain>
    </source>
</reference>
<reference key="4">
    <citation type="journal article" date="2003" name="Science">
        <title>Empirical analysis of transcriptional activity in the Arabidopsis genome.</title>
        <authorList>
            <person name="Yamada K."/>
            <person name="Lim J."/>
            <person name="Dale J.M."/>
            <person name="Chen H."/>
            <person name="Shinn P."/>
            <person name="Palm C.J."/>
            <person name="Southwick A.M."/>
            <person name="Wu H.C."/>
            <person name="Kim C.J."/>
            <person name="Nguyen M."/>
            <person name="Pham P.K."/>
            <person name="Cheuk R.F."/>
            <person name="Karlin-Newmann G."/>
            <person name="Liu S.X."/>
            <person name="Lam B."/>
            <person name="Sakano H."/>
            <person name="Wu T."/>
            <person name="Yu G."/>
            <person name="Miranda M."/>
            <person name="Quach H.L."/>
            <person name="Tripp M."/>
            <person name="Chang C.H."/>
            <person name="Lee J.M."/>
            <person name="Toriumi M.J."/>
            <person name="Chan M.M."/>
            <person name="Tang C.C."/>
            <person name="Onodera C.S."/>
            <person name="Deng J.M."/>
            <person name="Akiyama K."/>
            <person name="Ansari Y."/>
            <person name="Arakawa T."/>
            <person name="Banh J."/>
            <person name="Banno F."/>
            <person name="Bowser L."/>
            <person name="Brooks S.Y."/>
            <person name="Carninci P."/>
            <person name="Chao Q."/>
            <person name="Choy N."/>
            <person name="Enju A."/>
            <person name="Goldsmith A.D."/>
            <person name="Gurjal M."/>
            <person name="Hansen N.F."/>
            <person name="Hayashizaki Y."/>
            <person name="Johnson-Hopson C."/>
            <person name="Hsuan V.W."/>
            <person name="Iida K."/>
            <person name="Karnes M."/>
            <person name="Khan S."/>
            <person name="Koesema E."/>
            <person name="Ishida J."/>
            <person name="Jiang P.X."/>
            <person name="Jones T."/>
            <person name="Kawai J."/>
            <person name="Kamiya A."/>
            <person name="Meyers C."/>
            <person name="Nakajima M."/>
            <person name="Narusaka M."/>
            <person name="Seki M."/>
            <person name="Sakurai T."/>
            <person name="Satou M."/>
            <person name="Tamse R."/>
            <person name="Vaysberg M."/>
            <person name="Wallender E.K."/>
            <person name="Wong C."/>
            <person name="Yamamura Y."/>
            <person name="Yuan S."/>
            <person name="Shinozaki K."/>
            <person name="Davis R.W."/>
            <person name="Theologis A."/>
            <person name="Ecker J.R."/>
        </authorList>
    </citation>
    <scope>NUCLEOTIDE SEQUENCE [LARGE SCALE MRNA]</scope>
    <source>
        <strain>cv. Columbia</strain>
    </source>
</reference>
<accession>Q9LZZ7</accession>
<gene>
    <name type="ordered locus">At3g60660</name>
    <name type="ORF">T4C21_70</name>
</gene>
<keyword id="KW-0175">Coiled coil</keyword>
<keyword id="KW-1185">Reference proteome</keyword>
<proteinExistence type="evidence at transcript level"/>
<evidence type="ECO:0000255" key="1"/>
<evidence type="ECO:0000305" key="2"/>
<feature type="chain" id="PRO_0000373891" description="SKA complex subunit 1 homolog">
    <location>
        <begin position="1"/>
        <end position="272"/>
    </location>
</feature>
<feature type="coiled-coil region" evidence="1">
    <location>
        <begin position="48"/>
        <end position="75"/>
    </location>
</feature>
<name>SKA1_ARATH</name>